<proteinExistence type="uncertain"/>
<sequence length="61" mass="7268">MDLRMLYFLIYFAVTHLPSLISLLLTNNYILTLLFIVLHILFIWLPWYTSCFSYSVGSKFT</sequence>
<evidence type="ECO:0000255" key="1"/>
<evidence type="ECO:0000305" key="2"/>
<evidence type="ECO:0000305" key="3">
    <source>
    </source>
</evidence>
<gene>
    <name type="ordered locus">YPR170W-A</name>
</gene>
<comment type="subcellular location">
    <subcellularLocation>
        <location evidence="2">Membrane</location>
        <topology evidence="2">Multi-pass membrane protein</topology>
    </subcellularLocation>
</comment>
<comment type="miscellaneous">
    <text evidence="2">Completely overlaps YPR170W-B.</text>
</comment>
<comment type="caution">
    <text evidence="3">Product of a dubious gene prediction unlikely to encode a functional protein. Because of that it is not part of the S.cerevisiae S288c complete/reference proteome set.</text>
</comment>
<reference key="1">
    <citation type="journal article" date="1997" name="Nature">
        <title>The nucleotide sequence of Saccharomyces cerevisiae chromosome XVI.</title>
        <authorList>
            <person name="Bussey H."/>
            <person name="Storms R.K."/>
            <person name="Ahmed A."/>
            <person name="Albermann K."/>
            <person name="Allen E."/>
            <person name="Ansorge W."/>
            <person name="Araujo R."/>
            <person name="Aparicio A."/>
            <person name="Barrell B.G."/>
            <person name="Badcock K."/>
            <person name="Benes V."/>
            <person name="Botstein D."/>
            <person name="Bowman S."/>
            <person name="Brueckner M."/>
            <person name="Carpenter J."/>
            <person name="Cherry J.M."/>
            <person name="Chung E."/>
            <person name="Churcher C.M."/>
            <person name="Coster F."/>
            <person name="Davis K."/>
            <person name="Davis R.W."/>
            <person name="Dietrich F.S."/>
            <person name="Delius H."/>
            <person name="DiPaolo T."/>
            <person name="Dubois E."/>
            <person name="Duesterhoeft A."/>
            <person name="Duncan M."/>
            <person name="Floeth M."/>
            <person name="Fortin N."/>
            <person name="Friesen J.D."/>
            <person name="Fritz C."/>
            <person name="Goffeau A."/>
            <person name="Hall J."/>
            <person name="Hebling U."/>
            <person name="Heumann K."/>
            <person name="Hilbert H."/>
            <person name="Hillier L.W."/>
            <person name="Hunicke-Smith S."/>
            <person name="Hyman R.W."/>
            <person name="Johnston M."/>
            <person name="Kalman S."/>
            <person name="Kleine K."/>
            <person name="Komp C."/>
            <person name="Kurdi O."/>
            <person name="Lashkari D."/>
            <person name="Lew H."/>
            <person name="Lin A."/>
            <person name="Lin D."/>
            <person name="Louis E.J."/>
            <person name="Marathe R."/>
            <person name="Messenguy F."/>
            <person name="Mewes H.-W."/>
            <person name="Mirtipati S."/>
            <person name="Moestl D."/>
            <person name="Mueller-Auer S."/>
            <person name="Namath A."/>
            <person name="Nentwich U."/>
            <person name="Oefner P."/>
            <person name="Pearson D."/>
            <person name="Petel F.X."/>
            <person name="Pohl T.M."/>
            <person name="Purnelle B."/>
            <person name="Rajandream M.A."/>
            <person name="Rechmann S."/>
            <person name="Rieger M."/>
            <person name="Riles L."/>
            <person name="Roberts D."/>
            <person name="Schaefer M."/>
            <person name="Scharfe M."/>
            <person name="Scherens B."/>
            <person name="Schramm S."/>
            <person name="Schroeder M."/>
            <person name="Sdicu A.-M."/>
            <person name="Tettelin H."/>
            <person name="Urrestarazu L.A."/>
            <person name="Ushinsky S."/>
            <person name="Vierendeels F."/>
            <person name="Vissers S."/>
            <person name="Voss H."/>
            <person name="Walsh S.V."/>
            <person name="Wambutt R."/>
            <person name="Wang Y."/>
            <person name="Wedler E."/>
            <person name="Wedler H."/>
            <person name="Winnett E."/>
            <person name="Zhong W.-W."/>
            <person name="Zollner A."/>
            <person name="Vo D.H."/>
            <person name="Hani J."/>
        </authorList>
    </citation>
    <scope>NUCLEOTIDE SEQUENCE [LARGE SCALE GENOMIC DNA]</scope>
    <source>
        <strain>ATCC 204508 / S288c</strain>
    </source>
</reference>
<reference key="2">
    <citation type="journal article" date="2014" name="G3 (Bethesda)">
        <title>The reference genome sequence of Saccharomyces cerevisiae: Then and now.</title>
        <authorList>
            <person name="Engel S.R."/>
            <person name="Dietrich F.S."/>
            <person name="Fisk D.G."/>
            <person name="Binkley G."/>
            <person name="Balakrishnan R."/>
            <person name="Costanzo M.C."/>
            <person name="Dwight S.S."/>
            <person name="Hitz B.C."/>
            <person name="Karra K."/>
            <person name="Nash R.S."/>
            <person name="Weng S."/>
            <person name="Wong E.D."/>
            <person name="Lloyd P."/>
            <person name="Skrzypek M.S."/>
            <person name="Miyasato S.R."/>
            <person name="Simison M."/>
            <person name="Cherry J.M."/>
        </authorList>
    </citation>
    <scope>GENOME REANNOTATION</scope>
    <source>
        <strain>ATCC 204508 / S288c</strain>
    </source>
</reference>
<reference key="3">
    <citation type="journal article" date="2002" name="Genome Res.">
        <title>Parallel identification of new genes in Saccharomyces cerevisiae.</title>
        <authorList>
            <person name="Oshiro G."/>
            <person name="Wodicka L.M."/>
            <person name="Washburn M.P."/>
            <person name="Yates J.R. III"/>
            <person name="Lockhart D.J."/>
            <person name="Winzeler E.A."/>
        </authorList>
    </citation>
    <scope>GENOME REANNOTATION</scope>
</reference>
<accession>P0C5R8</accession>
<name>YP17A_YEAST</name>
<dbReference type="EMBL" id="U25842">
    <property type="status" value="NOT_ANNOTATED_CDS"/>
    <property type="molecule type" value="Genomic_DNA"/>
</dbReference>
<dbReference type="SMR" id="P0C5R8"/>
<dbReference type="STRING" id="4932.YPR170W-A"/>
<dbReference type="PaxDb" id="4932-YPR170W-A"/>
<dbReference type="TopDownProteomics" id="P0C5R8"/>
<dbReference type="EnsemblFungi" id="YPR170W-A_mRNA">
    <property type="protein sequence ID" value="YPR170W-A"/>
    <property type="gene ID" value="YPR170W-A"/>
</dbReference>
<dbReference type="AGR" id="SGD:S000028861"/>
<dbReference type="SGD" id="S000028861">
    <property type="gene designation" value="YPR170W-A"/>
</dbReference>
<dbReference type="HOGENOM" id="CLU_2923984_0_0_1"/>
<dbReference type="GO" id="GO:0016020">
    <property type="term" value="C:membrane"/>
    <property type="evidence" value="ECO:0007669"/>
    <property type="project" value="UniProtKB-SubCell"/>
</dbReference>
<keyword id="KW-0472">Membrane</keyword>
<keyword id="KW-0812">Transmembrane</keyword>
<keyword id="KW-1133">Transmembrane helix</keyword>
<feature type="chain" id="PRO_0000309066" description="Putative uncharacterized protein YPR170W-A">
    <location>
        <begin position="1"/>
        <end position="61"/>
    </location>
</feature>
<feature type="transmembrane region" description="Helical" evidence="1">
    <location>
        <begin position="5"/>
        <end position="25"/>
    </location>
</feature>
<feature type="transmembrane region" description="Helical" evidence="1">
    <location>
        <begin position="29"/>
        <end position="49"/>
    </location>
</feature>
<organism>
    <name type="scientific">Saccharomyces cerevisiae (strain ATCC 204508 / S288c)</name>
    <name type="common">Baker's yeast</name>
    <dbReference type="NCBI Taxonomy" id="559292"/>
    <lineage>
        <taxon>Eukaryota</taxon>
        <taxon>Fungi</taxon>
        <taxon>Dikarya</taxon>
        <taxon>Ascomycota</taxon>
        <taxon>Saccharomycotina</taxon>
        <taxon>Saccharomycetes</taxon>
        <taxon>Saccharomycetales</taxon>
        <taxon>Saccharomycetaceae</taxon>
        <taxon>Saccharomyces</taxon>
    </lineage>
</organism>
<protein>
    <recommendedName>
        <fullName>Putative uncharacterized protein YPR170W-A</fullName>
    </recommendedName>
</protein>